<dbReference type="EC" id="2.9.1.3" evidence="1"/>
<dbReference type="EMBL" id="CP001396">
    <property type="protein sequence ID" value="ACR65707.1"/>
    <property type="molecule type" value="Genomic_DNA"/>
</dbReference>
<dbReference type="SMR" id="C4ZUV3"/>
<dbReference type="KEGG" id="ebw:BWG_0380"/>
<dbReference type="HOGENOM" id="CLU_043456_1_0_6"/>
<dbReference type="GO" id="GO:0016765">
    <property type="term" value="F:transferase activity, transferring alkyl or aryl (other than methyl) groups"/>
    <property type="evidence" value="ECO:0007669"/>
    <property type="project" value="UniProtKB-UniRule"/>
</dbReference>
<dbReference type="GO" id="GO:0043828">
    <property type="term" value="F:tRNA 2-selenouridine synthase activity"/>
    <property type="evidence" value="ECO:0007669"/>
    <property type="project" value="UniProtKB-EC"/>
</dbReference>
<dbReference type="GO" id="GO:0002098">
    <property type="term" value="P:tRNA wobble uridine modification"/>
    <property type="evidence" value="ECO:0007669"/>
    <property type="project" value="UniProtKB-UniRule"/>
</dbReference>
<dbReference type="CDD" id="cd01520">
    <property type="entry name" value="RHOD_YbbB"/>
    <property type="match status" value="1"/>
</dbReference>
<dbReference type="FunFam" id="3.40.250.10:FF:000009">
    <property type="entry name" value="tRNA 2-selenouridine/geranyl-2-thiouridine synthase"/>
    <property type="match status" value="1"/>
</dbReference>
<dbReference type="Gene3D" id="3.40.250.10">
    <property type="entry name" value="Rhodanese-like domain"/>
    <property type="match status" value="1"/>
</dbReference>
<dbReference type="HAMAP" id="MF_01622">
    <property type="entry name" value="tRNA_sel_U_synth"/>
    <property type="match status" value="1"/>
</dbReference>
<dbReference type="InterPro" id="IPR001763">
    <property type="entry name" value="Rhodanese-like_dom"/>
</dbReference>
<dbReference type="InterPro" id="IPR036873">
    <property type="entry name" value="Rhodanese-like_dom_sf"/>
</dbReference>
<dbReference type="InterPro" id="IPR017582">
    <property type="entry name" value="SelU"/>
</dbReference>
<dbReference type="NCBIfam" id="NF008749">
    <property type="entry name" value="PRK11784.1-1"/>
    <property type="match status" value="1"/>
</dbReference>
<dbReference type="NCBIfam" id="NF008751">
    <property type="entry name" value="PRK11784.1-3"/>
    <property type="match status" value="1"/>
</dbReference>
<dbReference type="NCBIfam" id="TIGR03167">
    <property type="entry name" value="tRNA_sel_U_synt"/>
    <property type="match status" value="1"/>
</dbReference>
<dbReference type="PANTHER" id="PTHR30401">
    <property type="entry name" value="TRNA 2-SELENOURIDINE SYNTHASE"/>
    <property type="match status" value="1"/>
</dbReference>
<dbReference type="PANTHER" id="PTHR30401:SF0">
    <property type="entry name" value="TRNA 2-SELENOURIDINE SYNTHASE"/>
    <property type="match status" value="1"/>
</dbReference>
<dbReference type="SMART" id="SM00450">
    <property type="entry name" value="RHOD"/>
    <property type="match status" value="1"/>
</dbReference>
<dbReference type="SUPFAM" id="SSF52821">
    <property type="entry name" value="Rhodanese/Cell cycle control phosphatase"/>
    <property type="match status" value="1"/>
</dbReference>
<dbReference type="PROSITE" id="PS50206">
    <property type="entry name" value="RHODANESE_3"/>
    <property type="match status" value="1"/>
</dbReference>
<accession>C4ZUV3</accession>
<reference key="1">
    <citation type="journal article" date="2009" name="J. Bacteriol.">
        <title>Genomic sequencing reveals regulatory mutations and recombinational events in the widely used MC4100 lineage of Escherichia coli K-12.</title>
        <authorList>
            <person name="Ferenci T."/>
            <person name="Zhou Z."/>
            <person name="Betteridge T."/>
            <person name="Ren Y."/>
            <person name="Liu Y."/>
            <person name="Feng L."/>
            <person name="Reeves P.R."/>
            <person name="Wang L."/>
        </authorList>
    </citation>
    <scope>NUCLEOTIDE SEQUENCE [LARGE SCALE GENOMIC DNA]</scope>
    <source>
        <strain>K12 / MC4100 / BW2952</strain>
    </source>
</reference>
<comment type="function">
    <text evidence="1">Involved in the post-transcriptional modification of the uridine at the wobble position (U34) of tRNA(Lys), tRNA(Glu) and tRNA(Gln). Catalyzes the conversion of 2-thiouridine (S2U-RNA) to 2-selenouridine (Se2U-RNA). Acts in a two-step process involving geranylation of 2-thiouridine (S2U) to S-geranyl-2-thiouridine (geS2U) and subsequent selenation of the latter derivative to 2-selenouridine (Se2U) in the tRNA chain.</text>
</comment>
<comment type="catalytic activity">
    <reaction evidence="1">
        <text>5-methylaminomethyl-2-thiouridine(34) in tRNA + selenophosphate + (2E)-geranyl diphosphate + H2O + H(+) = 5-methylaminomethyl-2-selenouridine(34) in tRNA + (2E)-thiogeraniol + phosphate + diphosphate</text>
        <dbReference type="Rhea" id="RHEA:42716"/>
        <dbReference type="Rhea" id="RHEA-COMP:10195"/>
        <dbReference type="Rhea" id="RHEA-COMP:10196"/>
        <dbReference type="ChEBI" id="CHEBI:15377"/>
        <dbReference type="ChEBI" id="CHEBI:15378"/>
        <dbReference type="ChEBI" id="CHEBI:16144"/>
        <dbReference type="ChEBI" id="CHEBI:33019"/>
        <dbReference type="ChEBI" id="CHEBI:43474"/>
        <dbReference type="ChEBI" id="CHEBI:58057"/>
        <dbReference type="ChEBI" id="CHEBI:74455"/>
        <dbReference type="ChEBI" id="CHEBI:82743"/>
        <dbReference type="ChEBI" id="CHEBI:143703"/>
        <dbReference type="EC" id="2.9.1.3"/>
    </reaction>
    <physiologicalReaction direction="left-to-right" evidence="1">
        <dbReference type="Rhea" id="RHEA:42717"/>
    </physiologicalReaction>
</comment>
<comment type="catalytic activity">
    <reaction evidence="1">
        <text>5-methylaminomethyl-2-thiouridine(34) in tRNA + (2E)-geranyl diphosphate = 5-methylaminomethyl-S-(2E)-geranyl-thiouridine(34) in tRNA + diphosphate</text>
        <dbReference type="Rhea" id="RHEA:14085"/>
        <dbReference type="Rhea" id="RHEA-COMP:10195"/>
        <dbReference type="Rhea" id="RHEA-COMP:14654"/>
        <dbReference type="ChEBI" id="CHEBI:33019"/>
        <dbReference type="ChEBI" id="CHEBI:58057"/>
        <dbReference type="ChEBI" id="CHEBI:74455"/>
        <dbReference type="ChEBI" id="CHEBI:140632"/>
    </reaction>
    <physiologicalReaction direction="left-to-right" evidence="1">
        <dbReference type="Rhea" id="RHEA:14086"/>
    </physiologicalReaction>
</comment>
<comment type="catalytic activity">
    <reaction evidence="1">
        <text>5-methylaminomethyl-S-(2E)-geranyl-thiouridine(34) in tRNA + selenophosphate + H(+) = 5-methylaminomethyl-2-(Se-phospho)selenouridine(34) in tRNA + (2E)-thiogeraniol</text>
        <dbReference type="Rhea" id="RHEA:60172"/>
        <dbReference type="Rhea" id="RHEA-COMP:14654"/>
        <dbReference type="Rhea" id="RHEA-COMP:15523"/>
        <dbReference type="ChEBI" id="CHEBI:15378"/>
        <dbReference type="ChEBI" id="CHEBI:16144"/>
        <dbReference type="ChEBI" id="CHEBI:140632"/>
        <dbReference type="ChEBI" id="CHEBI:143702"/>
        <dbReference type="ChEBI" id="CHEBI:143703"/>
    </reaction>
    <physiologicalReaction direction="left-to-right" evidence="1">
        <dbReference type="Rhea" id="RHEA:60173"/>
    </physiologicalReaction>
</comment>
<comment type="catalytic activity">
    <reaction evidence="1">
        <text>5-methylaminomethyl-2-(Se-phospho)selenouridine(34) in tRNA + H2O = 5-methylaminomethyl-2-selenouridine(34) in tRNA + phosphate</text>
        <dbReference type="Rhea" id="RHEA:60176"/>
        <dbReference type="Rhea" id="RHEA-COMP:10196"/>
        <dbReference type="Rhea" id="RHEA-COMP:15523"/>
        <dbReference type="ChEBI" id="CHEBI:15377"/>
        <dbReference type="ChEBI" id="CHEBI:43474"/>
        <dbReference type="ChEBI" id="CHEBI:82743"/>
        <dbReference type="ChEBI" id="CHEBI:143702"/>
    </reaction>
    <physiologicalReaction direction="left-to-right" evidence="1">
        <dbReference type="Rhea" id="RHEA:60177"/>
    </physiologicalReaction>
</comment>
<comment type="subunit">
    <text evidence="1">Monomer.</text>
</comment>
<comment type="similarity">
    <text evidence="1">Belongs to the SelU family.</text>
</comment>
<keyword id="KW-0711">Selenium</keyword>
<keyword id="KW-0808">Transferase</keyword>
<gene>
    <name evidence="1" type="primary">selU</name>
    <name type="ordered locus">BWG_0380</name>
</gene>
<organism>
    <name type="scientific">Escherichia coli (strain K12 / MC4100 / BW2952)</name>
    <dbReference type="NCBI Taxonomy" id="595496"/>
    <lineage>
        <taxon>Bacteria</taxon>
        <taxon>Pseudomonadati</taxon>
        <taxon>Pseudomonadota</taxon>
        <taxon>Gammaproteobacteria</taxon>
        <taxon>Enterobacterales</taxon>
        <taxon>Enterobacteriaceae</taxon>
        <taxon>Escherichia</taxon>
    </lineage>
</organism>
<protein>
    <recommendedName>
        <fullName evidence="1">tRNA 2-selenouridine synthase</fullName>
        <ecNumber evidence="1">2.9.1.3</ecNumber>
    </recommendedName>
</protein>
<evidence type="ECO:0000255" key="1">
    <source>
        <dbReference type="HAMAP-Rule" id="MF_01622"/>
    </source>
</evidence>
<name>SELU_ECOBW</name>
<sequence length="364" mass="41111">MQERHTEQDYRALLIADTPIIDVRAPIEFEHGAMPAAINLPLMNNDERAAVGTCYKQQGSDAALALGHKLVAGEIRQQRMDAWRAACLQNPQGILCCARGGQRSHIVQSWLHAAGIDYPLVEGGYKALRQTAIQATIELAQKPIVLIGGCTGSGKTLLVQQQPNGVDLEGLARHRGSAFGRTLQPQLSQASFENLLAAEMLKTDARQNLRLWVLEDESRMIGSNHLPECLRERMTQAAIAVVEDPFEIRLERLNEEYFLRMHHDFTHAYGDEQGWQEYCEYLHHGLSAIKRRLGLQRYNELAARLDAALTTQLTTGSTDGHLAWLVPLLEEYYDPMYRYQLEKKAEKVVFRGEWAEVAEWVKAR</sequence>
<proteinExistence type="inferred from homology"/>
<feature type="chain" id="PRO_1000215741" description="tRNA 2-selenouridine synthase">
    <location>
        <begin position="1"/>
        <end position="364"/>
    </location>
</feature>
<feature type="domain" description="Rhodanese" evidence="1">
    <location>
        <begin position="14"/>
        <end position="137"/>
    </location>
</feature>
<feature type="active site" description="S-selanylcysteine intermediate" evidence="1">
    <location>
        <position position="97"/>
    </location>
</feature>